<name>EIF3J_KLULA</name>
<sequence>MSWDDEDFAVPSGSKEKPVLNSWDDEFAENDDEPVLESWEDEETAKPKPKAAAAAAAKAPKKASPSPAATPAATKNTMLDIDTLDDKTRKELLRKAELESDLNNAADLFGGLGVAEEHPRARAEREREQLAAVAQPAALTKDTPIQSHPLFSDLETKKDYQELRKALATAITSTSNKSLLNYSGGLAIDLIRDISKPMTVENIRQTIATLNVLMKDKEREERQARLAKVKGGTATGGAGKKKAKATRANLGGAFKKDNDFDLGGNDNFDDFGEDDFM</sequence>
<dbReference type="EMBL" id="CR382125">
    <property type="protein sequence ID" value="CAG99928.1"/>
    <property type="molecule type" value="Genomic_DNA"/>
</dbReference>
<dbReference type="RefSeq" id="XP_454841.1">
    <property type="nucleotide sequence ID" value="XM_454841.1"/>
</dbReference>
<dbReference type="SMR" id="Q6CMJ8"/>
<dbReference type="FunCoup" id="Q6CMJ8">
    <property type="interactions" value="129"/>
</dbReference>
<dbReference type="STRING" id="284590.Q6CMJ8"/>
<dbReference type="PaxDb" id="284590-Q6CMJ8"/>
<dbReference type="KEGG" id="kla:KLLA0_E19669g"/>
<dbReference type="eggNOG" id="KOG4813">
    <property type="taxonomic scope" value="Eukaryota"/>
</dbReference>
<dbReference type="HOGENOM" id="CLU_085412_0_0_1"/>
<dbReference type="InParanoid" id="Q6CMJ8"/>
<dbReference type="OMA" id="MESWDAE"/>
<dbReference type="Proteomes" id="UP000000598">
    <property type="component" value="Chromosome E"/>
</dbReference>
<dbReference type="GO" id="GO:0016282">
    <property type="term" value="C:eukaryotic 43S preinitiation complex"/>
    <property type="evidence" value="ECO:0007669"/>
    <property type="project" value="UniProtKB-UniRule"/>
</dbReference>
<dbReference type="GO" id="GO:0033290">
    <property type="term" value="C:eukaryotic 48S preinitiation complex"/>
    <property type="evidence" value="ECO:0007669"/>
    <property type="project" value="UniProtKB-UniRule"/>
</dbReference>
<dbReference type="GO" id="GO:0005852">
    <property type="term" value="C:eukaryotic translation initiation factor 3 complex"/>
    <property type="evidence" value="ECO:0007669"/>
    <property type="project" value="UniProtKB-UniRule"/>
</dbReference>
<dbReference type="GO" id="GO:0003995">
    <property type="term" value="F:acyl-CoA dehydrogenase activity"/>
    <property type="evidence" value="ECO:0007669"/>
    <property type="project" value="InterPro"/>
</dbReference>
<dbReference type="GO" id="GO:0003743">
    <property type="term" value="F:translation initiation factor activity"/>
    <property type="evidence" value="ECO:0007669"/>
    <property type="project" value="UniProtKB-UniRule"/>
</dbReference>
<dbReference type="GO" id="GO:0001732">
    <property type="term" value="P:formation of cytoplasmic translation initiation complex"/>
    <property type="evidence" value="ECO:0007669"/>
    <property type="project" value="UniProtKB-UniRule"/>
</dbReference>
<dbReference type="Gene3D" id="1.10.246.60">
    <property type="entry name" value="Eukaryotic translation initiation factor 3 like domains"/>
    <property type="match status" value="1"/>
</dbReference>
<dbReference type="HAMAP" id="MF_03009">
    <property type="entry name" value="eIF3j"/>
    <property type="match status" value="1"/>
</dbReference>
<dbReference type="InterPro" id="IPR006089">
    <property type="entry name" value="Acyl-CoA_DH_CS"/>
</dbReference>
<dbReference type="InterPro" id="IPR023194">
    <property type="entry name" value="eIF3-like_dom_sf"/>
</dbReference>
<dbReference type="InterPro" id="IPR013906">
    <property type="entry name" value="eIF3j"/>
</dbReference>
<dbReference type="PANTHER" id="PTHR21681">
    <property type="entry name" value="EUKARYOTIC TRANSLATION INITIATION FACTOR 3 SUBUNIT J"/>
    <property type="match status" value="1"/>
</dbReference>
<dbReference type="PANTHER" id="PTHR21681:SF0">
    <property type="entry name" value="EUKARYOTIC TRANSLATION INITIATION FACTOR 3 SUBUNIT J"/>
    <property type="match status" value="1"/>
</dbReference>
<dbReference type="Pfam" id="PF08597">
    <property type="entry name" value="eIF3_subunit"/>
    <property type="match status" value="1"/>
</dbReference>
<accession>Q6CMJ8</accession>
<keyword id="KW-0175">Coiled coil</keyword>
<keyword id="KW-0963">Cytoplasm</keyword>
<keyword id="KW-0396">Initiation factor</keyword>
<keyword id="KW-0648">Protein biosynthesis</keyword>
<keyword id="KW-1185">Reference proteome</keyword>
<feature type="chain" id="PRO_0000365155" description="Eukaryotic translation initiation factor 3 subunit J">
    <location>
        <begin position="1"/>
        <end position="277"/>
    </location>
</feature>
<feature type="region of interest" description="Disordered" evidence="2">
    <location>
        <begin position="1"/>
        <end position="80"/>
    </location>
</feature>
<feature type="region of interest" description="Disordered" evidence="2">
    <location>
        <begin position="257"/>
        <end position="277"/>
    </location>
</feature>
<feature type="coiled-coil region" evidence="1">
    <location>
        <begin position="199"/>
        <end position="230"/>
    </location>
</feature>
<feature type="compositionally biased region" description="Acidic residues" evidence="2">
    <location>
        <begin position="23"/>
        <end position="43"/>
    </location>
</feature>
<feature type="compositionally biased region" description="Low complexity" evidence="2">
    <location>
        <begin position="50"/>
        <end position="75"/>
    </location>
</feature>
<feature type="compositionally biased region" description="Acidic residues" evidence="2">
    <location>
        <begin position="267"/>
        <end position="277"/>
    </location>
</feature>
<evidence type="ECO:0000255" key="1">
    <source>
        <dbReference type="HAMAP-Rule" id="MF_03009"/>
    </source>
</evidence>
<evidence type="ECO:0000256" key="2">
    <source>
        <dbReference type="SAM" id="MobiDB-lite"/>
    </source>
</evidence>
<proteinExistence type="inferred from homology"/>
<organism>
    <name type="scientific">Kluyveromyces lactis (strain ATCC 8585 / CBS 2359 / DSM 70799 / NBRC 1267 / NRRL Y-1140 / WM37)</name>
    <name type="common">Yeast</name>
    <name type="synonym">Candida sphaerica</name>
    <dbReference type="NCBI Taxonomy" id="284590"/>
    <lineage>
        <taxon>Eukaryota</taxon>
        <taxon>Fungi</taxon>
        <taxon>Dikarya</taxon>
        <taxon>Ascomycota</taxon>
        <taxon>Saccharomycotina</taxon>
        <taxon>Saccharomycetes</taxon>
        <taxon>Saccharomycetales</taxon>
        <taxon>Saccharomycetaceae</taxon>
        <taxon>Kluyveromyces</taxon>
    </lineage>
</organism>
<protein>
    <recommendedName>
        <fullName evidence="1">Eukaryotic translation initiation factor 3 subunit J</fullName>
        <shortName evidence="1">eIF3j</shortName>
    </recommendedName>
    <alternativeName>
        <fullName>Eukaryotic translation initiation factor 3 30 kDa subunit</fullName>
        <shortName>eIF-3 30 kDa</shortName>
    </alternativeName>
</protein>
<comment type="function">
    <text evidence="1">Component of the eukaryotic translation initiation factor 3 (eIF-3) complex, which is involved in protein synthesis of a specialized repertoire of mRNAs and, together with other initiation factors, stimulates binding of mRNA and methionyl-tRNAi to the 40S ribosome. The eIF-3 complex specifically targets and initiates translation of a subset of mRNAs involved in cell proliferation.</text>
</comment>
<comment type="subunit">
    <text evidence="1">Component of the eukaryotic translation initiation factor 3 (eIF-3) complex.</text>
</comment>
<comment type="subcellular location">
    <subcellularLocation>
        <location evidence="1">Cytoplasm</location>
    </subcellularLocation>
</comment>
<comment type="similarity">
    <text evidence="1">Belongs to the eIF-3 subunit J family.</text>
</comment>
<reference key="1">
    <citation type="journal article" date="2004" name="Nature">
        <title>Genome evolution in yeasts.</title>
        <authorList>
            <person name="Dujon B."/>
            <person name="Sherman D."/>
            <person name="Fischer G."/>
            <person name="Durrens P."/>
            <person name="Casaregola S."/>
            <person name="Lafontaine I."/>
            <person name="de Montigny J."/>
            <person name="Marck C."/>
            <person name="Neuveglise C."/>
            <person name="Talla E."/>
            <person name="Goffard N."/>
            <person name="Frangeul L."/>
            <person name="Aigle M."/>
            <person name="Anthouard V."/>
            <person name="Babour A."/>
            <person name="Barbe V."/>
            <person name="Barnay S."/>
            <person name="Blanchin S."/>
            <person name="Beckerich J.-M."/>
            <person name="Beyne E."/>
            <person name="Bleykasten C."/>
            <person name="Boisrame A."/>
            <person name="Boyer J."/>
            <person name="Cattolico L."/>
            <person name="Confanioleri F."/>
            <person name="de Daruvar A."/>
            <person name="Despons L."/>
            <person name="Fabre E."/>
            <person name="Fairhead C."/>
            <person name="Ferry-Dumazet H."/>
            <person name="Groppi A."/>
            <person name="Hantraye F."/>
            <person name="Hennequin C."/>
            <person name="Jauniaux N."/>
            <person name="Joyet P."/>
            <person name="Kachouri R."/>
            <person name="Kerrest A."/>
            <person name="Koszul R."/>
            <person name="Lemaire M."/>
            <person name="Lesur I."/>
            <person name="Ma L."/>
            <person name="Muller H."/>
            <person name="Nicaud J.-M."/>
            <person name="Nikolski M."/>
            <person name="Oztas S."/>
            <person name="Ozier-Kalogeropoulos O."/>
            <person name="Pellenz S."/>
            <person name="Potier S."/>
            <person name="Richard G.-F."/>
            <person name="Straub M.-L."/>
            <person name="Suleau A."/>
            <person name="Swennen D."/>
            <person name="Tekaia F."/>
            <person name="Wesolowski-Louvel M."/>
            <person name="Westhof E."/>
            <person name="Wirth B."/>
            <person name="Zeniou-Meyer M."/>
            <person name="Zivanovic Y."/>
            <person name="Bolotin-Fukuhara M."/>
            <person name="Thierry A."/>
            <person name="Bouchier C."/>
            <person name="Caudron B."/>
            <person name="Scarpelli C."/>
            <person name="Gaillardin C."/>
            <person name="Weissenbach J."/>
            <person name="Wincker P."/>
            <person name="Souciet J.-L."/>
        </authorList>
    </citation>
    <scope>NUCLEOTIDE SEQUENCE [LARGE SCALE GENOMIC DNA]</scope>
    <source>
        <strain>ATCC 8585 / CBS 2359 / DSM 70799 / NBRC 1267 / NRRL Y-1140 / WM37</strain>
    </source>
</reference>
<gene>
    <name evidence="1" type="primary">HCR1</name>
    <name type="ordered locus">KLLA0E19669g</name>
</gene>